<accession>A0A2K8JW87</accession>
<dbReference type="EMBL" id="KY030916">
    <property type="protein sequence ID" value="ATU82667.1"/>
    <property type="molecule type" value="mRNA"/>
</dbReference>
<dbReference type="PDB" id="8UNG">
    <property type="method" value="NMR"/>
    <property type="chains" value="A=24-63"/>
</dbReference>
<dbReference type="PDBsum" id="8UNG"/>
<dbReference type="SMR" id="A0A2K8JW87"/>
<dbReference type="GO" id="GO:0005576">
    <property type="term" value="C:extracellular region"/>
    <property type="evidence" value="ECO:0007669"/>
    <property type="project" value="UniProtKB-SubCell"/>
</dbReference>
<dbReference type="GO" id="GO:0090729">
    <property type="term" value="F:toxin activity"/>
    <property type="evidence" value="ECO:0007669"/>
    <property type="project" value="UniProtKB-KW"/>
</dbReference>
<proteinExistence type="evidence at protein level"/>
<sequence>MSPYSILFVVVIALCLLPESIVGVCWDTGCQLNAWAVRGCAQYGMRDVNMKSCSGGIIYTCCD</sequence>
<keyword id="KW-0002">3D-structure</keyword>
<keyword id="KW-1015">Disulfide bond</keyword>
<keyword id="KW-0528">Neurotoxin</keyword>
<keyword id="KW-0964">Secreted</keyword>
<keyword id="KW-0732">Signal</keyword>
<keyword id="KW-0800">Toxin</keyword>
<feature type="signal peptide" evidence="1">
    <location>
        <begin position="1"/>
        <end position="23"/>
    </location>
</feature>
<feature type="chain" id="PRO_5014946766" description="Venom peptide U-reduvitoxin-Pp19">
    <location>
        <begin position="24"/>
        <end position="63"/>
    </location>
</feature>
<feature type="disulfide bond" evidence="3">
    <location>
        <begin position="15"/>
        <end position="62"/>
    </location>
</feature>
<feature type="disulfide bond" evidence="3">
    <location>
        <begin position="25"/>
        <end position="53"/>
    </location>
</feature>
<feature type="disulfide bond" evidence="3">
    <location>
        <begin position="30"/>
        <end position="61"/>
    </location>
</feature>
<feature type="strand" evidence="7">
    <location>
        <begin position="25"/>
        <end position="27"/>
    </location>
</feature>
<feature type="helix" evidence="7">
    <location>
        <begin position="33"/>
        <end position="35"/>
    </location>
</feature>
<feature type="helix" evidence="7">
    <location>
        <begin position="40"/>
        <end position="43"/>
    </location>
</feature>
<feature type="strand" evidence="7">
    <location>
        <begin position="45"/>
        <end position="51"/>
    </location>
</feature>
<feature type="strand" evidence="7">
    <location>
        <begin position="54"/>
        <end position="56"/>
    </location>
</feature>
<feature type="strand" evidence="7">
    <location>
        <begin position="58"/>
        <end position="62"/>
    </location>
</feature>
<reference key="1">
    <citation type="journal article" date="2018" name="Nat. Commun.">
        <title>The assassin bug Pristhesancus plagipennis produces two distinct venoms in separate gland lumens.</title>
        <authorList>
            <person name="Walker A.A."/>
            <person name="Mayhew M.L."/>
            <person name="Jin J."/>
            <person name="Herzig V."/>
            <person name="Undheim E.A.B."/>
            <person name="Sombke A."/>
            <person name="Fry B.G."/>
            <person name="Meritt D.J."/>
            <person name="King G.F."/>
        </authorList>
    </citation>
    <scope>NUCLEOTIDE SEQUENCE [MRNA]</scope>
    <scope>IDENTIFICATION BY MASS SPECTROMETRY</scope>
    <scope>TISSUE SPECIFICITY</scope>
    <scope>SUBCELLULAR LOCATION</scope>
    <source>
        <tissue>Venom</tissue>
        <tissue>Venom gland</tissue>
    </source>
</reference>
<reference key="2">
    <citation type="journal article" date="2024" name="Structure">
        <title>Structure and bioactivity of an insecticidal trans-defensin from assassin bug venom.</title>
        <authorList>
            <person name="Walker A.A."/>
            <person name="Chin Y.K."/>
            <person name="Guo S."/>
            <person name="Jin J."/>
            <person name="Wilbrink E."/>
            <person name="Goudarzi M.H."/>
            <person name="Wirth H."/>
            <person name="Gordon E."/>
            <person name="Weirauch C."/>
            <person name="King G.F."/>
        </authorList>
    </citation>
    <scope>STRUCTURE BY NMR OF 24-63</scope>
    <scope>FUNCTION</scope>
    <scope>RECOMBINANT EXPRESSION</scope>
    <scope>TISSUE SPECIFICITY</scope>
    <scope>SUBCELLULAR LOCATION</scope>
    <scope>DISULFIDE BONDS</scope>
    <scope>IDENTIFICATION BY MASS SPECTROMETRY</scope>
    <scope>TOXIC DOSE</scope>
    <scope>BIOASSAY</scope>
    <source>
        <tissue>Hemolymph</tissue>
        <tissue>Venom</tissue>
    </source>
</reference>
<protein>
    <recommendedName>
        <fullName evidence="4 5">Venom peptide U-reduvitoxin-Pp19</fullName>
        <shortName evidence="4">U-RDTX-Pp19</shortName>
    </recommendedName>
    <alternativeName>
        <fullName evidence="4">Trans-defensin</fullName>
    </alternativeName>
    <alternativeName>
        <fullName evidence="6">Venom peptide Pp19a</fullName>
    </alternativeName>
</protein>
<evidence type="ECO:0000255" key="1"/>
<evidence type="ECO:0000269" key="2">
    <source>
    </source>
</evidence>
<evidence type="ECO:0000269" key="3">
    <source>
    </source>
</evidence>
<evidence type="ECO:0000303" key="4">
    <source>
    </source>
</evidence>
<evidence type="ECO:0000305" key="5"/>
<evidence type="ECO:0000312" key="6">
    <source>
        <dbReference type="EMBL" id="ATU82667.1"/>
    </source>
</evidence>
<evidence type="ECO:0007829" key="7">
    <source>
        <dbReference type="PDB" id="8UNG"/>
    </source>
</evidence>
<comment type="function">
    <text evidence="3">Toxin with insecticidal activity. High doses of recombinant toxin causes impaired motor behavior of D.melanogaster, which progress slowly to paralysis and death after several hours.</text>
</comment>
<comment type="subcellular location">
    <subcellularLocation>
        <location evidence="2 3">Secreted</location>
    </subcellularLocation>
</comment>
<comment type="tissue specificity">
    <text evidence="2 3">Hemolymph (at protein level) (PubMed:38889720). Also weakly expressed by the venom gland (at protein level) (PubMed:29472578, PubMed:38889720).</text>
</comment>
<comment type="domain">
    <text evidence="3">Adopts a unique fold previously unknown among defensins produced by arthropods. This fold is similar to human alpha-defensin with the same disulfide connectivity.</text>
</comment>
<comment type="toxic dose">
    <text evidence="3">LD(50) [24 hours] is 51.7 nmol/g when injected into insects (D.melanogaster).</text>
</comment>
<comment type="miscellaneous">
    <text evidence="3">Negative results: Does not show antibacterial or antifungal effects.</text>
</comment>
<organism>
    <name type="scientific">Pristhesancus plagipennis</name>
    <name type="common">Common assassin bug</name>
    <dbReference type="NCBI Taxonomy" id="1955184"/>
    <lineage>
        <taxon>Eukaryota</taxon>
        <taxon>Metazoa</taxon>
        <taxon>Ecdysozoa</taxon>
        <taxon>Arthropoda</taxon>
        <taxon>Hexapoda</taxon>
        <taxon>Insecta</taxon>
        <taxon>Pterygota</taxon>
        <taxon>Neoptera</taxon>
        <taxon>Paraneoptera</taxon>
        <taxon>Hemiptera</taxon>
        <taxon>Heteroptera</taxon>
        <taxon>Panheteroptera</taxon>
        <taxon>Cimicomorpha</taxon>
        <taxon>Reduviidae</taxon>
        <taxon>Harpactorinae</taxon>
        <taxon>Harpactorini</taxon>
        <taxon>Pristhesancus</taxon>
    </lineage>
</organism>
<name>TX19A_PRIPG</name>